<proteinExistence type="inferred from homology"/>
<dbReference type="EC" id="2.5.1.-" evidence="1"/>
<dbReference type="EMBL" id="CP000305">
    <property type="protein sequence ID" value="ABG17856.1"/>
    <property type="molecule type" value="Genomic_DNA"/>
</dbReference>
<dbReference type="EMBL" id="ACNQ01000009">
    <property type="protein sequence ID" value="EEO76962.1"/>
    <property type="molecule type" value="Genomic_DNA"/>
</dbReference>
<dbReference type="RefSeq" id="WP_002211208.1">
    <property type="nucleotide sequence ID" value="NZ_ACNQ01000009.1"/>
</dbReference>
<dbReference type="SMR" id="Q1CJH4"/>
<dbReference type="GeneID" id="57976612"/>
<dbReference type="KEGG" id="ypn:YPN_1526"/>
<dbReference type="HOGENOM" id="CLU_052665_0_0_6"/>
<dbReference type="Proteomes" id="UP000008936">
    <property type="component" value="Chromosome"/>
</dbReference>
<dbReference type="GO" id="GO:0008168">
    <property type="term" value="F:methyltransferase activity"/>
    <property type="evidence" value="ECO:0007669"/>
    <property type="project" value="TreeGrafter"/>
</dbReference>
<dbReference type="GO" id="GO:0016765">
    <property type="term" value="F:transferase activity, transferring alkyl or aryl (other than methyl) groups"/>
    <property type="evidence" value="ECO:0007669"/>
    <property type="project" value="UniProtKB-UniRule"/>
</dbReference>
<dbReference type="GO" id="GO:0002098">
    <property type="term" value="P:tRNA wobble uridine modification"/>
    <property type="evidence" value="ECO:0007669"/>
    <property type="project" value="InterPro"/>
</dbReference>
<dbReference type="CDD" id="cd02440">
    <property type="entry name" value="AdoMet_MTases"/>
    <property type="match status" value="1"/>
</dbReference>
<dbReference type="Gene3D" id="3.40.50.150">
    <property type="entry name" value="Vaccinia Virus protein VP39"/>
    <property type="match status" value="1"/>
</dbReference>
<dbReference type="HAMAP" id="MF_01590">
    <property type="entry name" value="tRNA_carboxymethyltr_CmoB"/>
    <property type="match status" value="1"/>
</dbReference>
<dbReference type="InterPro" id="IPR010017">
    <property type="entry name" value="CmoB"/>
</dbReference>
<dbReference type="InterPro" id="IPR027555">
    <property type="entry name" value="Mo5U34_MeTrfas-like"/>
</dbReference>
<dbReference type="InterPro" id="IPR029063">
    <property type="entry name" value="SAM-dependent_MTases_sf"/>
</dbReference>
<dbReference type="NCBIfam" id="NF011650">
    <property type="entry name" value="PRK15068.1"/>
    <property type="match status" value="1"/>
</dbReference>
<dbReference type="NCBIfam" id="TIGR00452">
    <property type="entry name" value="tRNA 5-methoxyuridine(34)/uridine 5-oxyacetic acid(34) synthase CmoB"/>
    <property type="match status" value="1"/>
</dbReference>
<dbReference type="PANTHER" id="PTHR43464">
    <property type="entry name" value="METHYLTRANSFERASE"/>
    <property type="match status" value="1"/>
</dbReference>
<dbReference type="PANTHER" id="PTHR43464:SF95">
    <property type="entry name" value="TRNA U34 CARBOXYMETHYLTRANSFERASE"/>
    <property type="match status" value="1"/>
</dbReference>
<dbReference type="Pfam" id="PF08003">
    <property type="entry name" value="Methyltransf_9"/>
    <property type="match status" value="1"/>
</dbReference>
<dbReference type="SUPFAM" id="SSF53335">
    <property type="entry name" value="S-adenosyl-L-methionine-dependent methyltransferases"/>
    <property type="match status" value="1"/>
</dbReference>
<sequence>MIEFGDFYRLIAKGPLSPWLDTLPAQLSAWQRESLHGKFKTWFNAVEHLPQLTPTTLDLHSGVRAEMSPPISAGQREGMENMLRALMPWRKGPFSLYGLDIDTEWRSDWKWQRVLPHISPLAGRTILDVGCGSGYHLWRMIGEGAHLAVGIDPMQLFLCQFEAIRKLLGGDQRAHVLPLGIEQLPELAAFDTVFSMGVLYHRRSPLDHLYQLKNQLVTDGELVLETLVVEGDSQQVLVPGDRYAQMRNVYFIPSAPALKAWLEKCGFVDVRIADMAVTTTEEQRRTDWMTSESLAEFLDPHDHSKTVEGYPAPLRAVLIARKP</sequence>
<feature type="chain" id="PRO_0000313995" description="tRNA U34 carboxymethyltransferase">
    <location>
        <begin position="1"/>
        <end position="323"/>
    </location>
</feature>
<feature type="binding site" evidence="1">
    <location>
        <position position="91"/>
    </location>
    <ligand>
        <name>carboxy-S-adenosyl-L-methionine</name>
        <dbReference type="ChEBI" id="CHEBI:134278"/>
    </ligand>
</feature>
<feature type="binding site" evidence="1">
    <location>
        <position position="105"/>
    </location>
    <ligand>
        <name>carboxy-S-adenosyl-L-methionine</name>
        <dbReference type="ChEBI" id="CHEBI:134278"/>
    </ligand>
</feature>
<feature type="binding site" evidence="1">
    <location>
        <position position="110"/>
    </location>
    <ligand>
        <name>carboxy-S-adenosyl-L-methionine</name>
        <dbReference type="ChEBI" id="CHEBI:134278"/>
    </ligand>
</feature>
<feature type="binding site" evidence="1">
    <location>
        <position position="130"/>
    </location>
    <ligand>
        <name>carboxy-S-adenosyl-L-methionine</name>
        <dbReference type="ChEBI" id="CHEBI:134278"/>
    </ligand>
</feature>
<feature type="binding site" evidence="1">
    <location>
        <begin position="181"/>
        <end position="182"/>
    </location>
    <ligand>
        <name>carboxy-S-adenosyl-L-methionine</name>
        <dbReference type="ChEBI" id="CHEBI:134278"/>
    </ligand>
</feature>
<feature type="binding site" evidence="1">
    <location>
        <position position="196"/>
    </location>
    <ligand>
        <name>carboxy-S-adenosyl-L-methionine</name>
        <dbReference type="ChEBI" id="CHEBI:134278"/>
    </ligand>
</feature>
<feature type="binding site" evidence="1">
    <location>
        <position position="200"/>
    </location>
    <ligand>
        <name>carboxy-S-adenosyl-L-methionine</name>
        <dbReference type="ChEBI" id="CHEBI:134278"/>
    </ligand>
</feature>
<feature type="binding site" evidence="1">
    <location>
        <position position="315"/>
    </location>
    <ligand>
        <name>carboxy-S-adenosyl-L-methionine</name>
        <dbReference type="ChEBI" id="CHEBI:134278"/>
    </ligand>
</feature>
<comment type="function">
    <text evidence="1">Catalyzes carboxymethyl transfer from carboxy-S-adenosyl-L-methionine (Cx-SAM) to 5-hydroxyuridine (ho5U) to form 5-carboxymethoxyuridine (cmo5U) at position 34 in tRNAs.</text>
</comment>
<comment type="catalytic activity">
    <reaction evidence="1">
        <text>carboxy-S-adenosyl-L-methionine + 5-hydroxyuridine(34) in tRNA = 5-carboxymethoxyuridine(34) in tRNA + S-adenosyl-L-homocysteine + H(+)</text>
        <dbReference type="Rhea" id="RHEA:52848"/>
        <dbReference type="Rhea" id="RHEA-COMP:13381"/>
        <dbReference type="Rhea" id="RHEA-COMP:13383"/>
        <dbReference type="ChEBI" id="CHEBI:15378"/>
        <dbReference type="ChEBI" id="CHEBI:57856"/>
        <dbReference type="ChEBI" id="CHEBI:134278"/>
        <dbReference type="ChEBI" id="CHEBI:136877"/>
        <dbReference type="ChEBI" id="CHEBI:136879"/>
    </reaction>
</comment>
<comment type="subunit">
    <text evidence="1">Homotetramer.</text>
</comment>
<comment type="similarity">
    <text evidence="1">Belongs to the class I-like SAM-binding methyltransferase superfamily. CmoB family.</text>
</comment>
<gene>
    <name evidence="1" type="primary">cmoB</name>
    <name type="ordered locus">YPN_1526</name>
    <name type="ORF">YP516_1694</name>
</gene>
<accession>Q1CJH4</accession>
<accession>C4GSF2</accession>
<reference key="1">
    <citation type="journal article" date="2006" name="J. Bacteriol.">
        <title>Complete genome sequence of Yersinia pestis strains Antiqua and Nepal516: evidence of gene reduction in an emerging pathogen.</title>
        <authorList>
            <person name="Chain P.S.G."/>
            <person name="Hu P."/>
            <person name="Malfatti S.A."/>
            <person name="Radnedge L."/>
            <person name="Larimer F."/>
            <person name="Vergez L.M."/>
            <person name="Worsham P."/>
            <person name="Chu M.C."/>
            <person name="Andersen G.L."/>
        </authorList>
    </citation>
    <scope>NUCLEOTIDE SEQUENCE [LARGE SCALE GENOMIC DNA]</scope>
    <source>
        <strain>Nepal516</strain>
    </source>
</reference>
<reference key="2">
    <citation type="submission" date="2009-04" db="EMBL/GenBank/DDBJ databases">
        <title>Yersinia pestis Nepal516A whole genome shotgun sequencing project.</title>
        <authorList>
            <person name="Plunkett G. III"/>
            <person name="Anderson B.D."/>
            <person name="Baumler D.J."/>
            <person name="Burland V."/>
            <person name="Cabot E.L."/>
            <person name="Glasner J.D."/>
            <person name="Mau B."/>
            <person name="Neeno-Eckwall E."/>
            <person name="Perna N.T."/>
            <person name="Munk A.C."/>
            <person name="Tapia R."/>
            <person name="Green L.D."/>
            <person name="Rogers Y.C."/>
            <person name="Detter J.C."/>
            <person name="Bruce D.C."/>
            <person name="Brettin T.S."/>
        </authorList>
    </citation>
    <scope>NUCLEOTIDE SEQUENCE [LARGE SCALE GENOMIC DNA]</scope>
    <source>
        <strain>Nepal516</strain>
    </source>
</reference>
<protein>
    <recommendedName>
        <fullName evidence="1">tRNA U34 carboxymethyltransferase</fullName>
        <ecNumber evidence="1">2.5.1.-</ecNumber>
    </recommendedName>
</protein>
<keyword id="KW-0808">Transferase</keyword>
<keyword id="KW-0819">tRNA processing</keyword>
<evidence type="ECO:0000255" key="1">
    <source>
        <dbReference type="HAMAP-Rule" id="MF_01590"/>
    </source>
</evidence>
<organism>
    <name type="scientific">Yersinia pestis bv. Antiqua (strain Nepal516)</name>
    <dbReference type="NCBI Taxonomy" id="377628"/>
    <lineage>
        <taxon>Bacteria</taxon>
        <taxon>Pseudomonadati</taxon>
        <taxon>Pseudomonadota</taxon>
        <taxon>Gammaproteobacteria</taxon>
        <taxon>Enterobacterales</taxon>
        <taxon>Yersiniaceae</taxon>
        <taxon>Yersinia</taxon>
    </lineage>
</organism>
<name>CMOB_YERPN</name>